<comment type="function">
    <text evidence="1">Catalyzes the condensation of pantoate with beta-alanine in an ATP-dependent reaction via a pantoyl-adenylate intermediate.</text>
</comment>
<comment type="catalytic activity">
    <reaction evidence="1">
        <text>(R)-pantoate + beta-alanine + ATP = (R)-pantothenate + AMP + diphosphate + H(+)</text>
        <dbReference type="Rhea" id="RHEA:10912"/>
        <dbReference type="ChEBI" id="CHEBI:15378"/>
        <dbReference type="ChEBI" id="CHEBI:15980"/>
        <dbReference type="ChEBI" id="CHEBI:29032"/>
        <dbReference type="ChEBI" id="CHEBI:30616"/>
        <dbReference type="ChEBI" id="CHEBI:33019"/>
        <dbReference type="ChEBI" id="CHEBI:57966"/>
        <dbReference type="ChEBI" id="CHEBI:456215"/>
        <dbReference type="EC" id="6.3.2.1"/>
    </reaction>
</comment>
<comment type="pathway">
    <text evidence="1">Cofactor biosynthesis; (R)-pantothenate biosynthesis; (R)-pantothenate from (R)-pantoate and beta-alanine: step 1/1.</text>
</comment>
<comment type="subunit">
    <text evidence="1">Homodimer.</text>
</comment>
<comment type="subcellular location">
    <subcellularLocation>
        <location evidence="1">Cytoplasm</location>
    </subcellularLocation>
</comment>
<comment type="miscellaneous">
    <text evidence="1">The reaction proceeds by a bi uni uni bi ping pong mechanism.</text>
</comment>
<comment type="similarity">
    <text evidence="1">Belongs to the pantothenate synthetase family.</text>
</comment>
<dbReference type="EC" id="6.3.2.1" evidence="1"/>
<dbReference type="EMBL" id="AM286415">
    <property type="protein sequence ID" value="CAL10824.1"/>
    <property type="molecule type" value="Genomic_DNA"/>
</dbReference>
<dbReference type="RefSeq" id="WP_011815587.1">
    <property type="nucleotide sequence ID" value="NC_008800.1"/>
</dbReference>
<dbReference type="RefSeq" id="YP_001005064.1">
    <property type="nucleotide sequence ID" value="NC_008800.1"/>
</dbReference>
<dbReference type="SMR" id="A1JJN7"/>
<dbReference type="KEGG" id="yen:YE0719"/>
<dbReference type="PATRIC" id="fig|393305.7.peg.813"/>
<dbReference type="eggNOG" id="COG0414">
    <property type="taxonomic scope" value="Bacteria"/>
</dbReference>
<dbReference type="HOGENOM" id="CLU_047148_0_0_6"/>
<dbReference type="OrthoDB" id="9773087at2"/>
<dbReference type="UniPathway" id="UPA00028">
    <property type="reaction ID" value="UER00005"/>
</dbReference>
<dbReference type="Proteomes" id="UP000000642">
    <property type="component" value="Chromosome"/>
</dbReference>
<dbReference type="GO" id="GO:0005829">
    <property type="term" value="C:cytosol"/>
    <property type="evidence" value="ECO:0007669"/>
    <property type="project" value="TreeGrafter"/>
</dbReference>
<dbReference type="GO" id="GO:0005524">
    <property type="term" value="F:ATP binding"/>
    <property type="evidence" value="ECO:0007669"/>
    <property type="project" value="UniProtKB-KW"/>
</dbReference>
<dbReference type="GO" id="GO:0004592">
    <property type="term" value="F:pantoate-beta-alanine ligase activity"/>
    <property type="evidence" value="ECO:0007669"/>
    <property type="project" value="UniProtKB-UniRule"/>
</dbReference>
<dbReference type="GO" id="GO:0015940">
    <property type="term" value="P:pantothenate biosynthetic process"/>
    <property type="evidence" value="ECO:0007669"/>
    <property type="project" value="UniProtKB-UniRule"/>
</dbReference>
<dbReference type="CDD" id="cd00560">
    <property type="entry name" value="PanC"/>
    <property type="match status" value="1"/>
</dbReference>
<dbReference type="FunFam" id="3.30.1300.10:FF:000001">
    <property type="entry name" value="Pantothenate synthetase"/>
    <property type="match status" value="1"/>
</dbReference>
<dbReference type="FunFam" id="3.40.50.620:FF:000013">
    <property type="entry name" value="Pantothenate synthetase"/>
    <property type="match status" value="1"/>
</dbReference>
<dbReference type="Gene3D" id="3.40.50.620">
    <property type="entry name" value="HUPs"/>
    <property type="match status" value="1"/>
</dbReference>
<dbReference type="Gene3D" id="3.30.1300.10">
    <property type="entry name" value="Pantoate-beta-alanine ligase, C-terminal domain"/>
    <property type="match status" value="1"/>
</dbReference>
<dbReference type="HAMAP" id="MF_00158">
    <property type="entry name" value="PanC"/>
    <property type="match status" value="1"/>
</dbReference>
<dbReference type="InterPro" id="IPR003721">
    <property type="entry name" value="Pantoate_ligase"/>
</dbReference>
<dbReference type="InterPro" id="IPR042176">
    <property type="entry name" value="Pantoate_ligase_C"/>
</dbReference>
<dbReference type="InterPro" id="IPR014729">
    <property type="entry name" value="Rossmann-like_a/b/a_fold"/>
</dbReference>
<dbReference type="NCBIfam" id="TIGR00018">
    <property type="entry name" value="panC"/>
    <property type="match status" value="1"/>
</dbReference>
<dbReference type="PANTHER" id="PTHR21299">
    <property type="entry name" value="CYTIDYLATE KINASE/PANTOATE-BETA-ALANINE LIGASE"/>
    <property type="match status" value="1"/>
</dbReference>
<dbReference type="PANTHER" id="PTHR21299:SF1">
    <property type="entry name" value="PANTOATE--BETA-ALANINE LIGASE"/>
    <property type="match status" value="1"/>
</dbReference>
<dbReference type="Pfam" id="PF02569">
    <property type="entry name" value="Pantoate_ligase"/>
    <property type="match status" value="1"/>
</dbReference>
<dbReference type="SUPFAM" id="SSF52374">
    <property type="entry name" value="Nucleotidylyl transferase"/>
    <property type="match status" value="1"/>
</dbReference>
<sequence>MLIIETLPLLRQQIRRWRQEGKRVALVPTMGNLHEGHMTLVEDAKTRADVVVVSIFVNPLQFERPDDLARYPRTLQEDCEKLTRHGVDLVFAPAAADVYPAGLEAQTYVDVPALSTILEGASRPGHFRGVSTIVSKLFNLVQPDVACFGEKDYQQLALIRKMVADMGYDINIVGVPIVRAKDGLALSSRNGYLSAQERKIAPQLYKIMQALAEKLALGERQIDDLLADTAEQLRDAGFTPDELFIRDAQSLQPLTVDSKQAIILMAAWLGKARLIDNQQVDLHS</sequence>
<protein>
    <recommendedName>
        <fullName evidence="1">Pantothenate synthetase</fullName>
        <shortName evidence="1">PS</shortName>
        <ecNumber evidence="1">6.3.2.1</ecNumber>
    </recommendedName>
    <alternativeName>
        <fullName evidence="1">Pantoate--beta-alanine ligase</fullName>
    </alternativeName>
    <alternativeName>
        <fullName evidence="1">Pantoate-activating enzyme</fullName>
    </alternativeName>
</protein>
<proteinExistence type="inferred from homology"/>
<gene>
    <name evidence="1" type="primary">panC</name>
    <name type="ordered locus">YE0719</name>
</gene>
<reference key="1">
    <citation type="journal article" date="2006" name="PLoS Genet.">
        <title>The complete genome sequence and comparative genome analysis of the high pathogenicity Yersinia enterocolitica strain 8081.</title>
        <authorList>
            <person name="Thomson N.R."/>
            <person name="Howard S."/>
            <person name="Wren B.W."/>
            <person name="Holden M.T.G."/>
            <person name="Crossman L."/>
            <person name="Challis G.L."/>
            <person name="Churcher C."/>
            <person name="Mungall K."/>
            <person name="Brooks K."/>
            <person name="Chillingworth T."/>
            <person name="Feltwell T."/>
            <person name="Abdellah Z."/>
            <person name="Hauser H."/>
            <person name="Jagels K."/>
            <person name="Maddison M."/>
            <person name="Moule S."/>
            <person name="Sanders M."/>
            <person name="Whitehead S."/>
            <person name="Quail M.A."/>
            <person name="Dougan G."/>
            <person name="Parkhill J."/>
            <person name="Prentice M.B."/>
        </authorList>
    </citation>
    <scope>NUCLEOTIDE SEQUENCE [LARGE SCALE GENOMIC DNA]</scope>
    <source>
        <strain>NCTC 13174 / 8081</strain>
    </source>
</reference>
<feature type="chain" id="PRO_0000305579" description="Pantothenate synthetase">
    <location>
        <begin position="1"/>
        <end position="284"/>
    </location>
</feature>
<feature type="active site" description="Proton donor" evidence="1">
    <location>
        <position position="37"/>
    </location>
</feature>
<feature type="binding site" evidence="1">
    <location>
        <begin position="30"/>
        <end position="37"/>
    </location>
    <ligand>
        <name>ATP</name>
        <dbReference type="ChEBI" id="CHEBI:30616"/>
    </ligand>
</feature>
<feature type="binding site" evidence="1">
    <location>
        <position position="61"/>
    </location>
    <ligand>
        <name>(R)-pantoate</name>
        <dbReference type="ChEBI" id="CHEBI:15980"/>
    </ligand>
</feature>
<feature type="binding site" evidence="1">
    <location>
        <position position="61"/>
    </location>
    <ligand>
        <name>beta-alanine</name>
        <dbReference type="ChEBI" id="CHEBI:57966"/>
    </ligand>
</feature>
<feature type="binding site" evidence="1">
    <location>
        <begin position="149"/>
        <end position="152"/>
    </location>
    <ligand>
        <name>ATP</name>
        <dbReference type="ChEBI" id="CHEBI:30616"/>
    </ligand>
</feature>
<feature type="binding site" evidence="1">
    <location>
        <position position="155"/>
    </location>
    <ligand>
        <name>(R)-pantoate</name>
        <dbReference type="ChEBI" id="CHEBI:15980"/>
    </ligand>
</feature>
<feature type="binding site" evidence="1">
    <location>
        <position position="178"/>
    </location>
    <ligand>
        <name>ATP</name>
        <dbReference type="ChEBI" id="CHEBI:30616"/>
    </ligand>
</feature>
<feature type="binding site" evidence="1">
    <location>
        <begin position="186"/>
        <end position="189"/>
    </location>
    <ligand>
        <name>ATP</name>
        <dbReference type="ChEBI" id="CHEBI:30616"/>
    </ligand>
</feature>
<name>PANC_YERE8</name>
<accession>A1JJN7</accession>
<keyword id="KW-0067">ATP-binding</keyword>
<keyword id="KW-0963">Cytoplasm</keyword>
<keyword id="KW-0436">Ligase</keyword>
<keyword id="KW-0547">Nucleotide-binding</keyword>
<keyword id="KW-0566">Pantothenate biosynthesis</keyword>
<evidence type="ECO:0000255" key="1">
    <source>
        <dbReference type="HAMAP-Rule" id="MF_00158"/>
    </source>
</evidence>
<organism>
    <name type="scientific">Yersinia enterocolitica serotype O:8 / biotype 1B (strain NCTC 13174 / 8081)</name>
    <dbReference type="NCBI Taxonomy" id="393305"/>
    <lineage>
        <taxon>Bacteria</taxon>
        <taxon>Pseudomonadati</taxon>
        <taxon>Pseudomonadota</taxon>
        <taxon>Gammaproteobacteria</taxon>
        <taxon>Enterobacterales</taxon>
        <taxon>Yersiniaceae</taxon>
        <taxon>Yersinia</taxon>
    </lineage>
</organism>